<dbReference type="EC" id="2.3.1.-"/>
<dbReference type="EMBL" id="AF027499">
    <property type="protein sequence ID" value="AAC04569.1"/>
    <property type="molecule type" value="Genomic_DNA"/>
</dbReference>
<dbReference type="RefSeq" id="WP_012699740.1">
    <property type="nucleotide sequence ID" value="NZ_FPKM01000036.1"/>
</dbReference>
<dbReference type="SMR" id="O52197"/>
<dbReference type="OMA" id="FNEGRPG"/>
<dbReference type="UniPathway" id="UPA00286"/>
<dbReference type="GO" id="GO:0042597">
    <property type="term" value="C:periplasmic space"/>
    <property type="evidence" value="ECO:0007669"/>
    <property type="project" value="UniProtKB-SubCell"/>
</dbReference>
<dbReference type="GO" id="GO:0005886">
    <property type="term" value="C:plasma membrane"/>
    <property type="evidence" value="ECO:0007669"/>
    <property type="project" value="UniProtKB-SubCell"/>
</dbReference>
<dbReference type="GO" id="GO:0016746">
    <property type="term" value="F:acyltransferase activity"/>
    <property type="evidence" value="ECO:0007669"/>
    <property type="project" value="UniProtKB-KW"/>
</dbReference>
<dbReference type="GO" id="GO:0042121">
    <property type="term" value="P:alginic acid biosynthetic process"/>
    <property type="evidence" value="ECO:0007669"/>
    <property type="project" value="UniProtKB-UniPathway"/>
</dbReference>
<dbReference type="CDD" id="cd14442">
    <property type="entry name" value="AlgJ_like"/>
    <property type="match status" value="1"/>
</dbReference>
<dbReference type="InterPro" id="IPR034657">
    <property type="entry name" value="AlgJ"/>
</dbReference>
<dbReference type="InterPro" id="IPR031811">
    <property type="entry name" value="ALGX/ALGJ_SGNH-like"/>
</dbReference>
<dbReference type="Pfam" id="PF16822">
    <property type="entry name" value="ALGX"/>
    <property type="match status" value="1"/>
</dbReference>
<proteinExistence type="inferred from homology"/>
<feature type="signal peptide" evidence="2">
    <location>
        <begin position="1"/>
        <end position="29"/>
    </location>
</feature>
<feature type="chain" id="PRO_0000001119" description="Probable alginate O-acetylase AlgJ">
    <location>
        <begin position="30"/>
        <end position="388"/>
    </location>
</feature>
<feature type="active site" evidence="1">
    <location>
        <position position="190"/>
    </location>
</feature>
<feature type="active site" description="Proton acceptor" evidence="1">
    <location>
        <position position="192"/>
    </location>
</feature>
<feature type="active site" description="Nucleophile" evidence="1">
    <location>
        <position position="288"/>
    </location>
</feature>
<accession>O52197</accession>
<evidence type="ECO:0000250" key="1"/>
<evidence type="ECO:0000255" key="2"/>
<evidence type="ECO:0000305" key="3"/>
<reference key="1">
    <citation type="journal article" date="1999" name="Gene">
        <title>Transcriptional organization of the Azotobacter vinelandii algGXLVIFA genes: characterization of algF mutants.</title>
        <authorList>
            <person name="Vazquez-Ramos A."/>
            <person name="Moreno S."/>
            <person name="Guzman J."/>
            <person name="Alvarado A."/>
            <person name="Espin G."/>
        </authorList>
    </citation>
    <scope>NUCLEOTIDE SEQUENCE [GENOMIC DNA]</scope>
    <source>
        <strain>ATCC 9046</strain>
    </source>
</reference>
<protein>
    <recommendedName>
        <fullName>Probable alginate O-acetylase AlgJ</fullName>
        <ecNumber>2.3.1.-</ecNumber>
    </recommendedName>
    <alternativeName>
        <fullName>Alginate biosynthesis protein AlgJ</fullName>
    </alternativeName>
</protein>
<name>ALGJ_AZOVI</name>
<organism>
    <name type="scientific">Azotobacter vinelandii</name>
    <dbReference type="NCBI Taxonomy" id="354"/>
    <lineage>
        <taxon>Bacteria</taxon>
        <taxon>Pseudomonadati</taxon>
        <taxon>Pseudomonadota</taxon>
        <taxon>Gammaproteobacteria</taxon>
        <taxon>Pseudomonadales</taxon>
        <taxon>Pseudomonadaceae</taxon>
        <taxon>Azotobacter</taxon>
    </lineage>
</organism>
<comment type="function">
    <text>Together with AlgI and AlgF, forms an inner membrane complex which probably interacts with the alginate polymerization-transport complex and adds acetyl groups at the O-2 and O-3 positions of mannuronate residues. Acetylation of alginate increases cyst resistance to desiccation.</text>
</comment>
<comment type="pathway">
    <text>Glycan biosynthesis; alginate biosynthesis.</text>
</comment>
<comment type="subcellular location">
    <subcellularLocation>
        <location evidence="1">Cell inner membrane</location>
        <topology evidence="1">Peripheral membrane protein</topology>
        <orientation evidence="1">Periplasmic side</orientation>
    </subcellularLocation>
    <subcellularLocation>
        <location evidence="1">Periplasm</location>
    </subcellularLocation>
</comment>
<comment type="similarity">
    <text evidence="3">Belongs to the AlgJ family.</text>
</comment>
<gene>
    <name type="primary">algJ</name>
    <name type="synonym">algV</name>
</gene>
<sequence length="388" mass="42499">MNRTTNLVYAGTFAGTLLALSLWSLKGAAGFSTADNTPVLNGKLALAFEKHYDEEFPIKKLGTNLWAALDYTLFGEGRPGVVIGANQWLFSDEEFKPTAAASQNITDNQALIQGVRETLARNNVQLVMAILPAKARLYPENFGEQQPASLHEQLYQNFRRIVADAGIQAPDLLGPLQQAKAGGQVFLRTDTHWTPYGAQVVAGQLATTIKPIGVLPESGNVYVTETLPGGPHKGDLTNFLPLDPLFEELLPPPDQLAKHNTRQQEESAPAGDDLFAETQVPVALVGTSYSADERWNFAGALRQALGSDLVNFAEDGRGPLLPMLKFLQSEDFKKSPPRLVIWEFPERYLPMAYDLSEFDADWIAQLKAAGRQDKQLADNTATNQGARH</sequence>
<keyword id="KW-0012">Acyltransferase</keyword>
<keyword id="KW-0016">Alginate biosynthesis</keyword>
<keyword id="KW-0997">Cell inner membrane</keyword>
<keyword id="KW-1003">Cell membrane</keyword>
<keyword id="KW-0472">Membrane</keyword>
<keyword id="KW-0574">Periplasm</keyword>
<keyword id="KW-0732">Signal</keyword>
<keyword id="KW-0808">Transferase</keyword>